<dbReference type="EC" id="1.1.1.25" evidence="1"/>
<dbReference type="EMBL" id="CP000825">
    <property type="protein sequence ID" value="ABV51591.1"/>
    <property type="molecule type" value="Genomic_DNA"/>
</dbReference>
<dbReference type="RefSeq" id="WP_012008578.1">
    <property type="nucleotide sequence ID" value="NC_009840.1"/>
</dbReference>
<dbReference type="SMR" id="A8G7L0"/>
<dbReference type="STRING" id="93060.P9215_19781"/>
<dbReference type="KEGG" id="pmh:P9215_19781"/>
<dbReference type="eggNOG" id="COG0169">
    <property type="taxonomic scope" value="Bacteria"/>
</dbReference>
<dbReference type="HOGENOM" id="CLU_044063_4_1_3"/>
<dbReference type="OrthoDB" id="9792692at2"/>
<dbReference type="UniPathway" id="UPA00053">
    <property type="reaction ID" value="UER00087"/>
</dbReference>
<dbReference type="Proteomes" id="UP000002014">
    <property type="component" value="Chromosome"/>
</dbReference>
<dbReference type="GO" id="GO:0005829">
    <property type="term" value="C:cytosol"/>
    <property type="evidence" value="ECO:0007669"/>
    <property type="project" value="TreeGrafter"/>
</dbReference>
<dbReference type="GO" id="GO:0050661">
    <property type="term" value="F:NADP binding"/>
    <property type="evidence" value="ECO:0007669"/>
    <property type="project" value="InterPro"/>
</dbReference>
<dbReference type="GO" id="GO:0004764">
    <property type="term" value="F:shikimate 3-dehydrogenase (NADP+) activity"/>
    <property type="evidence" value="ECO:0007669"/>
    <property type="project" value="UniProtKB-UniRule"/>
</dbReference>
<dbReference type="GO" id="GO:0008652">
    <property type="term" value="P:amino acid biosynthetic process"/>
    <property type="evidence" value="ECO:0007669"/>
    <property type="project" value="UniProtKB-KW"/>
</dbReference>
<dbReference type="GO" id="GO:0009073">
    <property type="term" value="P:aromatic amino acid family biosynthetic process"/>
    <property type="evidence" value="ECO:0007669"/>
    <property type="project" value="UniProtKB-KW"/>
</dbReference>
<dbReference type="GO" id="GO:0009423">
    <property type="term" value="P:chorismate biosynthetic process"/>
    <property type="evidence" value="ECO:0007669"/>
    <property type="project" value="UniProtKB-UniRule"/>
</dbReference>
<dbReference type="GO" id="GO:0019632">
    <property type="term" value="P:shikimate metabolic process"/>
    <property type="evidence" value="ECO:0007669"/>
    <property type="project" value="InterPro"/>
</dbReference>
<dbReference type="CDD" id="cd01065">
    <property type="entry name" value="NAD_bind_Shikimate_DH"/>
    <property type="match status" value="1"/>
</dbReference>
<dbReference type="Gene3D" id="3.40.50.10860">
    <property type="entry name" value="Leucine Dehydrogenase, chain A, domain 1"/>
    <property type="match status" value="1"/>
</dbReference>
<dbReference type="Gene3D" id="3.40.50.720">
    <property type="entry name" value="NAD(P)-binding Rossmann-like Domain"/>
    <property type="match status" value="1"/>
</dbReference>
<dbReference type="HAMAP" id="MF_00222">
    <property type="entry name" value="Shikimate_DH_AroE"/>
    <property type="match status" value="1"/>
</dbReference>
<dbReference type="InterPro" id="IPR046346">
    <property type="entry name" value="Aminoacid_DH-like_N_sf"/>
</dbReference>
<dbReference type="InterPro" id="IPR036291">
    <property type="entry name" value="NAD(P)-bd_dom_sf"/>
</dbReference>
<dbReference type="InterPro" id="IPR041121">
    <property type="entry name" value="SDH_C"/>
</dbReference>
<dbReference type="InterPro" id="IPR011342">
    <property type="entry name" value="Shikimate_DH"/>
</dbReference>
<dbReference type="InterPro" id="IPR013708">
    <property type="entry name" value="Shikimate_DH-bd_N"/>
</dbReference>
<dbReference type="InterPro" id="IPR022893">
    <property type="entry name" value="Shikimate_DH_fam"/>
</dbReference>
<dbReference type="InterPro" id="IPR006151">
    <property type="entry name" value="Shikm_DH/Glu-tRNA_Rdtase"/>
</dbReference>
<dbReference type="NCBIfam" id="TIGR00507">
    <property type="entry name" value="aroE"/>
    <property type="match status" value="1"/>
</dbReference>
<dbReference type="NCBIfam" id="NF001314">
    <property type="entry name" value="PRK00258.2-2"/>
    <property type="match status" value="1"/>
</dbReference>
<dbReference type="PANTHER" id="PTHR21089:SF1">
    <property type="entry name" value="BIFUNCTIONAL 3-DEHYDROQUINATE DEHYDRATASE_SHIKIMATE DEHYDROGENASE, CHLOROPLASTIC"/>
    <property type="match status" value="1"/>
</dbReference>
<dbReference type="PANTHER" id="PTHR21089">
    <property type="entry name" value="SHIKIMATE DEHYDROGENASE"/>
    <property type="match status" value="1"/>
</dbReference>
<dbReference type="Pfam" id="PF18317">
    <property type="entry name" value="SDH_C"/>
    <property type="match status" value="1"/>
</dbReference>
<dbReference type="Pfam" id="PF01488">
    <property type="entry name" value="Shikimate_DH"/>
    <property type="match status" value="1"/>
</dbReference>
<dbReference type="Pfam" id="PF08501">
    <property type="entry name" value="Shikimate_dh_N"/>
    <property type="match status" value="1"/>
</dbReference>
<dbReference type="SUPFAM" id="SSF53223">
    <property type="entry name" value="Aminoacid dehydrogenase-like, N-terminal domain"/>
    <property type="match status" value="1"/>
</dbReference>
<dbReference type="SUPFAM" id="SSF51735">
    <property type="entry name" value="NAD(P)-binding Rossmann-fold domains"/>
    <property type="match status" value="1"/>
</dbReference>
<gene>
    <name evidence="1" type="primary">aroE</name>
    <name type="ordered locus">P9215_19781</name>
</gene>
<accession>A8G7L0</accession>
<comment type="function">
    <text evidence="1">Involved in the biosynthesis of the chorismate, which leads to the biosynthesis of aromatic amino acids. Catalyzes the reversible NADPH linked reduction of 3-dehydroshikimate (DHSA) to yield shikimate (SA).</text>
</comment>
<comment type="catalytic activity">
    <reaction evidence="1">
        <text>shikimate + NADP(+) = 3-dehydroshikimate + NADPH + H(+)</text>
        <dbReference type="Rhea" id="RHEA:17737"/>
        <dbReference type="ChEBI" id="CHEBI:15378"/>
        <dbReference type="ChEBI" id="CHEBI:16630"/>
        <dbReference type="ChEBI" id="CHEBI:36208"/>
        <dbReference type="ChEBI" id="CHEBI:57783"/>
        <dbReference type="ChEBI" id="CHEBI:58349"/>
        <dbReference type="EC" id="1.1.1.25"/>
    </reaction>
</comment>
<comment type="pathway">
    <text evidence="1">Metabolic intermediate biosynthesis; chorismate biosynthesis; chorismate from D-erythrose 4-phosphate and phosphoenolpyruvate: step 4/7.</text>
</comment>
<comment type="subunit">
    <text evidence="1">Homodimer.</text>
</comment>
<comment type="similarity">
    <text evidence="1">Belongs to the shikimate dehydrogenase family.</text>
</comment>
<name>AROE_PROM2</name>
<keyword id="KW-0028">Amino-acid biosynthesis</keyword>
<keyword id="KW-0057">Aromatic amino acid biosynthesis</keyword>
<keyword id="KW-0521">NADP</keyword>
<keyword id="KW-0560">Oxidoreductase</keyword>
<protein>
    <recommendedName>
        <fullName evidence="1">Shikimate dehydrogenase (NADP(+))</fullName>
        <shortName evidence="1">SDH</shortName>
        <ecNumber evidence="1">1.1.1.25</ecNumber>
    </recommendedName>
</protein>
<organism>
    <name type="scientific">Prochlorococcus marinus (strain MIT 9215)</name>
    <dbReference type="NCBI Taxonomy" id="93060"/>
    <lineage>
        <taxon>Bacteria</taxon>
        <taxon>Bacillati</taxon>
        <taxon>Cyanobacteriota</taxon>
        <taxon>Cyanophyceae</taxon>
        <taxon>Synechococcales</taxon>
        <taxon>Prochlorococcaceae</taxon>
        <taxon>Prochlorococcus</taxon>
    </lineage>
</organism>
<proteinExistence type="inferred from homology"/>
<feature type="chain" id="PRO_0000325146" description="Shikimate dehydrogenase (NADP(+))">
    <location>
        <begin position="1"/>
        <end position="286"/>
    </location>
</feature>
<feature type="active site" description="Proton acceptor" evidence="1">
    <location>
        <position position="70"/>
    </location>
</feature>
<feature type="binding site" evidence="1">
    <location>
        <begin position="19"/>
        <end position="21"/>
    </location>
    <ligand>
        <name>shikimate</name>
        <dbReference type="ChEBI" id="CHEBI:36208"/>
    </ligand>
</feature>
<feature type="binding site" evidence="1">
    <location>
        <position position="66"/>
    </location>
    <ligand>
        <name>shikimate</name>
        <dbReference type="ChEBI" id="CHEBI:36208"/>
    </ligand>
</feature>
<feature type="binding site" evidence="1">
    <location>
        <position position="91"/>
    </location>
    <ligand>
        <name>shikimate</name>
        <dbReference type="ChEBI" id="CHEBI:36208"/>
    </ligand>
</feature>
<feature type="binding site" evidence="1">
    <location>
        <position position="107"/>
    </location>
    <ligand>
        <name>shikimate</name>
        <dbReference type="ChEBI" id="CHEBI:36208"/>
    </ligand>
</feature>
<feature type="binding site" evidence="1">
    <location>
        <begin position="129"/>
        <end position="133"/>
    </location>
    <ligand>
        <name>NADP(+)</name>
        <dbReference type="ChEBI" id="CHEBI:58349"/>
    </ligand>
</feature>
<feature type="binding site" evidence="1">
    <location>
        <position position="229"/>
    </location>
    <ligand>
        <name>NADP(+)</name>
        <dbReference type="ChEBI" id="CHEBI:58349"/>
    </ligand>
</feature>
<feature type="binding site" evidence="1">
    <location>
        <position position="231"/>
    </location>
    <ligand>
        <name>shikimate</name>
        <dbReference type="ChEBI" id="CHEBI:36208"/>
    </ligand>
</feature>
<feature type="binding site" evidence="1">
    <location>
        <position position="252"/>
    </location>
    <ligand>
        <name>NADP(+)</name>
        <dbReference type="ChEBI" id="CHEBI:58349"/>
    </ligand>
</feature>
<sequence length="286" mass="31576">MISSKTSFIALIGNPVSHSLSPIMQNAALQYLGLDLIYIAIPCKDEDLELVLNSLKKINCKGLNITIPHKEKVFNLCSEISSIASKLKAINTLRLNSEKEWSGTNTDVEGFIYPLKNLNLTKKKSIVLGSGGAARSVIQGLINLNLSKISVISRNKSSVEELIKDFGNQIQLQGLLNTNNEVQNLIEEANLVVNTTPVGMKTAKHEMNVLPYGESFWRSLNSKTIVYDLIYNPAPTHLLKFSANKGCRTIDGLQMLVAQGLKSLSFWTNGLEVPFHIMNDALKNHL</sequence>
<reference key="1">
    <citation type="journal article" date="2007" name="PLoS Genet.">
        <title>Patterns and implications of gene gain and loss in the evolution of Prochlorococcus.</title>
        <authorList>
            <person name="Kettler G.C."/>
            <person name="Martiny A.C."/>
            <person name="Huang K."/>
            <person name="Zucker J."/>
            <person name="Coleman M.L."/>
            <person name="Rodrigue S."/>
            <person name="Chen F."/>
            <person name="Lapidus A."/>
            <person name="Ferriera S."/>
            <person name="Johnson J."/>
            <person name="Steglich C."/>
            <person name="Church G.M."/>
            <person name="Richardson P."/>
            <person name="Chisholm S.W."/>
        </authorList>
    </citation>
    <scope>NUCLEOTIDE SEQUENCE [LARGE SCALE GENOMIC DNA]</scope>
    <source>
        <strain>MIT 9215</strain>
    </source>
</reference>
<evidence type="ECO:0000255" key="1">
    <source>
        <dbReference type="HAMAP-Rule" id="MF_00222"/>
    </source>
</evidence>